<name>PLSY_ALIF1</name>
<evidence type="ECO:0000255" key="1">
    <source>
        <dbReference type="HAMAP-Rule" id="MF_01043"/>
    </source>
</evidence>
<feature type="chain" id="PRO_0000188486" description="Glycerol-3-phosphate acyltransferase">
    <location>
        <begin position="1"/>
        <end position="198"/>
    </location>
</feature>
<feature type="transmembrane region" description="Helical" evidence="1">
    <location>
        <begin position="4"/>
        <end position="24"/>
    </location>
</feature>
<feature type="transmembrane region" description="Helical" evidence="1">
    <location>
        <begin position="53"/>
        <end position="75"/>
    </location>
</feature>
<feature type="transmembrane region" description="Helical" evidence="1">
    <location>
        <begin position="80"/>
        <end position="102"/>
    </location>
</feature>
<feature type="transmembrane region" description="Helical" evidence="1">
    <location>
        <begin position="112"/>
        <end position="132"/>
    </location>
</feature>
<feature type="transmembrane region" description="Helical" evidence="1">
    <location>
        <begin position="134"/>
        <end position="154"/>
    </location>
</feature>
<protein>
    <recommendedName>
        <fullName evidence="1">Glycerol-3-phosphate acyltransferase</fullName>
    </recommendedName>
    <alternativeName>
        <fullName evidence="1">Acyl-PO4 G3P acyltransferase</fullName>
    </alternativeName>
    <alternativeName>
        <fullName evidence="1">Acyl-phosphate--glycerol-3-phosphate acyltransferase</fullName>
    </alternativeName>
    <alternativeName>
        <fullName evidence="1">G3P acyltransferase</fullName>
        <shortName evidence="1">GPAT</shortName>
        <ecNumber evidence="1">2.3.1.275</ecNumber>
    </alternativeName>
    <alternativeName>
        <fullName evidence="1">Lysophosphatidic acid synthase</fullName>
        <shortName evidence="1">LPA synthase</shortName>
    </alternativeName>
</protein>
<comment type="function">
    <text evidence="1">Catalyzes the transfer of an acyl group from acyl-phosphate (acyl-PO(4)) to glycerol-3-phosphate (G3P) to form lysophosphatidic acid (LPA). This enzyme utilizes acyl-phosphate as fatty acyl donor, but not acyl-CoA or acyl-ACP.</text>
</comment>
<comment type="catalytic activity">
    <reaction evidence="1">
        <text>an acyl phosphate + sn-glycerol 3-phosphate = a 1-acyl-sn-glycero-3-phosphate + phosphate</text>
        <dbReference type="Rhea" id="RHEA:34075"/>
        <dbReference type="ChEBI" id="CHEBI:43474"/>
        <dbReference type="ChEBI" id="CHEBI:57597"/>
        <dbReference type="ChEBI" id="CHEBI:57970"/>
        <dbReference type="ChEBI" id="CHEBI:59918"/>
        <dbReference type="EC" id="2.3.1.275"/>
    </reaction>
</comment>
<comment type="pathway">
    <text evidence="1">Lipid metabolism; phospholipid metabolism.</text>
</comment>
<comment type="subunit">
    <text evidence="1">Probably interacts with PlsX.</text>
</comment>
<comment type="subcellular location">
    <subcellularLocation>
        <location evidence="1">Cell inner membrane</location>
        <topology evidence="1">Multi-pass membrane protein</topology>
    </subcellularLocation>
</comment>
<comment type="similarity">
    <text evidence="1">Belongs to the PlsY family.</text>
</comment>
<gene>
    <name evidence="1" type="primary">plsY</name>
    <name type="ordered locus">VF_2248</name>
</gene>
<dbReference type="EC" id="2.3.1.275" evidence="1"/>
<dbReference type="EMBL" id="CP000020">
    <property type="protein sequence ID" value="AAW86743.1"/>
    <property type="molecule type" value="Genomic_DNA"/>
</dbReference>
<dbReference type="RefSeq" id="WP_005421021.1">
    <property type="nucleotide sequence ID" value="NZ_CAWLES010000001.1"/>
</dbReference>
<dbReference type="RefSeq" id="YP_205631.1">
    <property type="nucleotide sequence ID" value="NC_006840.2"/>
</dbReference>
<dbReference type="SMR" id="Q5E2K3"/>
<dbReference type="STRING" id="312309.VF_2248"/>
<dbReference type="EnsemblBacteria" id="AAW86743">
    <property type="protein sequence ID" value="AAW86743"/>
    <property type="gene ID" value="VF_2248"/>
</dbReference>
<dbReference type="GeneID" id="54164964"/>
<dbReference type="KEGG" id="vfi:VF_2248"/>
<dbReference type="PATRIC" id="fig|312309.11.peg.2286"/>
<dbReference type="eggNOG" id="COG0344">
    <property type="taxonomic scope" value="Bacteria"/>
</dbReference>
<dbReference type="HOGENOM" id="CLU_081254_0_2_6"/>
<dbReference type="OrthoDB" id="9777124at2"/>
<dbReference type="UniPathway" id="UPA00085"/>
<dbReference type="Proteomes" id="UP000000537">
    <property type="component" value="Chromosome I"/>
</dbReference>
<dbReference type="GO" id="GO:0005886">
    <property type="term" value="C:plasma membrane"/>
    <property type="evidence" value="ECO:0007669"/>
    <property type="project" value="UniProtKB-SubCell"/>
</dbReference>
<dbReference type="GO" id="GO:0043772">
    <property type="term" value="F:acyl-phosphate glycerol-3-phosphate acyltransferase activity"/>
    <property type="evidence" value="ECO:0007669"/>
    <property type="project" value="UniProtKB-UniRule"/>
</dbReference>
<dbReference type="GO" id="GO:0008654">
    <property type="term" value="P:phospholipid biosynthetic process"/>
    <property type="evidence" value="ECO:0007669"/>
    <property type="project" value="UniProtKB-UniRule"/>
</dbReference>
<dbReference type="HAMAP" id="MF_01043">
    <property type="entry name" value="PlsY"/>
    <property type="match status" value="1"/>
</dbReference>
<dbReference type="InterPro" id="IPR003811">
    <property type="entry name" value="G3P_acylTferase_PlsY"/>
</dbReference>
<dbReference type="NCBIfam" id="TIGR00023">
    <property type="entry name" value="glycerol-3-phosphate 1-O-acyltransferase PlsY"/>
    <property type="match status" value="1"/>
</dbReference>
<dbReference type="PANTHER" id="PTHR30309:SF0">
    <property type="entry name" value="GLYCEROL-3-PHOSPHATE ACYLTRANSFERASE-RELATED"/>
    <property type="match status" value="1"/>
</dbReference>
<dbReference type="PANTHER" id="PTHR30309">
    <property type="entry name" value="INNER MEMBRANE PROTEIN YGIH"/>
    <property type="match status" value="1"/>
</dbReference>
<dbReference type="Pfam" id="PF02660">
    <property type="entry name" value="G3P_acyltransf"/>
    <property type="match status" value="1"/>
</dbReference>
<dbReference type="SMART" id="SM01207">
    <property type="entry name" value="G3P_acyltransf"/>
    <property type="match status" value="1"/>
</dbReference>
<reference key="1">
    <citation type="journal article" date="2005" name="Proc. Natl. Acad. Sci. U.S.A.">
        <title>Complete genome sequence of Vibrio fischeri: a symbiotic bacterium with pathogenic congeners.</title>
        <authorList>
            <person name="Ruby E.G."/>
            <person name="Urbanowski M."/>
            <person name="Campbell J."/>
            <person name="Dunn A."/>
            <person name="Faini M."/>
            <person name="Gunsalus R."/>
            <person name="Lostroh P."/>
            <person name="Lupp C."/>
            <person name="McCann J."/>
            <person name="Millikan D."/>
            <person name="Schaefer A."/>
            <person name="Stabb E."/>
            <person name="Stevens A."/>
            <person name="Visick K."/>
            <person name="Whistler C."/>
            <person name="Greenberg E.P."/>
        </authorList>
    </citation>
    <scope>NUCLEOTIDE SEQUENCE [LARGE SCALE GENOMIC DNA]</scope>
    <source>
        <strain>ATCC 700601 / ES114</strain>
    </source>
</reference>
<proteinExistence type="inferred from homology"/>
<sequence>MTPLALIMIIIAYLLGSISSAVLICRLKGLPDPRTSGSHNPGATNVFRIGGRSAAGLVLLCDILKGMLPVWGGYFLEINPFMLGIIAISACLGHMYPLFFHFKGGKGVATALGALAPIGLDLTGMLFGCWVVTVLVTGYSSLASMITALLAPLFTWLVKPQYTLPVAMLSCLIVLKHHENIKRFFEGKETKIWQRKRD</sequence>
<organism>
    <name type="scientific">Aliivibrio fischeri (strain ATCC 700601 / ES114)</name>
    <name type="common">Vibrio fischeri</name>
    <dbReference type="NCBI Taxonomy" id="312309"/>
    <lineage>
        <taxon>Bacteria</taxon>
        <taxon>Pseudomonadati</taxon>
        <taxon>Pseudomonadota</taxon>
        <taxon>Gammaproteobacteria</taxon>
        <taxon>Vibrionales</taxon>
        <taxon>Vibrionaceae</taxon>
        <taxon>Aliivibrio</taxon>
    </lineage>
</organism>
<accession>Q5E2K3</accession>
<keyword id="KW-0997">Cell inner membrane</keyword>
<keyword id="KW-1003">Cell membrane</keyword>
<keyword id="KW-0444">Lipid biosynthesis</keyword>
<keyword id="KW-0443">Lipid metabolism</keyword>
<keyword id="KW-0472">Membrane</keyword>
<keyword id="KW-0594">Phospholipid biosynthesis</keyword>
<keyword id="KW-1208">Phospholipid metabolism</keyword>
<keyword id="KW-1185">Reference proteome</keyword>
<keyword id="KW-0808">Transferase</keyword>
<keyword id="KW-0812">Transmembrane</keyword>
<keyword id="KW-1133">Transmembrane helix</keyword>